<sequence>MSITNEQILDAIAEMSVMQVVELISAMEEKFGVSAAAAVVSGPAAAAAVEEQTEFNVILAAAGANKVAVIKAVRGATGLGLKEAKALVDGAPASVKEAVSKEEAEALKKELEEAGATVEVK</sequence>
<name>RL7_VIBC3</name>
<protein>
    <recommendedName>
        <fullName evidence="1">Large ribosomal subunit protein bL12</fullName>
    </recommendedName>
    <alternativeName>
        <fullName evidence="2">50S ribosomal protein L7/L12</fullName>
    </alternativeName>
</protein>
<gene>
    <name evidence="1" type="primary">rplL</name>
    <name type="ordered locus">VC0395_A2729</name>
    <name type="ordered locus">VC395_0370</name>
</gene>
<comment type="function">
    <text evidence="1">Forms part of the ribosomal stalk which helps the ribosome interact with GTP-bound translation factors. Is thus essential for accurate translation.</text>
</comment>
<comment type="subunit">
    <text evidence="1">Homodimer. Part of the ribosomal stalk of the 50S ribosomal subunit. Forms a multimeric L10(L12)X complex, where L10 forms an elongated spine to which 2 to 4 L12 dimers bind in a sequential fashion. Binds GTP-bound translation factors.</text>
</comment>
<comment type="similarity">
    <text evidence="1">Belongs to the bacterial ribosomal protein bL12 family.</text>
</comment>
<keyword id="KW-0687">Ribonucleoprotein</keyword>
<keyword id="KW-0689">Ribosomal protein</keyword>
<dbReference type="EMBL" id="CP000627">
    <property type="protein sequence ID" value="ABQ19851.1"/>
    <property type="molecule type" value="Genomic_DNA"/>
</dbReference>
<dbReference type="EMBL" id="CP001235">
    <property type="protein sequence ID" value="ACP08393.1"/>
    <property type="molecule type" value="Genomic_DNA"/>
</dbReference>
<dbReference type="RefSeq" id="WP_000028973.1">
    <property type="nucleotide sequence ID" value="NZ_JAACZH010000036.1"/>
</dbReference>
<dbReference type="SMR" id="A5F3P4"/>
<dbReference type="GeneID" id="69720938"/>
<dbReference type="KEGG" id="vco:VC0395_A2729"/>
<dbReference type="KEGG" id="vcr:VC395_0370"/>
<dbReference type="PATRIC" id="fig|345073.21.peg.358"/>
<dbReference type="eggNOG" id="COG0222">
    <property type="taxonomic scope" value="Bacteria"/>
</dbReference>
<dbReference type="HOGENOM" id="CLU_086499_3_2_6"/>
<dbReference type="OrthoDB" id="9811748at2"/>
<dbReference type="Proteomes" id="UP000000249">
    <property type="component" value="Chromosome 2"/>
</dbReference>
<dbReference type="GO" id="GO:0022625">
    <property type="term" value="C:cytosolic large ribosomal subunit"/>
    <property type="evidence" value="ECO:0007669"/>
    <property type="project" value="TreeGrafter"/>
</dbReference>
<dbReference type="GO" id="GO:0003729">
    <property type="term" value="F:mRNA binding"/>
    <property type="evidence" value="ECO:0007669"/>
    <property type="project" value="TreeGrafter"/>
</dbReference>
<dbReference type="GO" id="GO:0003735">
    <property type="term" value="F:structural constituent of ribosome"/>
    <property type="evidence" value="ECO:0007669"/>
    <property type="project" value="InterPro"/>
</dbReference>
<dbReference type="GO" id="GO:0006412">
    <property type="term" value="P:translation"/>
    <property type="evidence" value="ECO:0007669"/>
    <property type="project" value="UniProtKB-UniRule"/>
</dbReference>
<dbReference type="CDD" id="cd00387">
    <property type="entry name" value="Ribosomal_L7_L12"/>
    <property type="match status" value="1"/>
</dbReference>
<dbReference type="FunFam" id="1.20.5.710:FF:000001">
    <property type="entry name" value="50S ribosomal protein L7/L12"/>
    <property type="match status" value="1"/>
</dbReference>
<dbReference type="FunFam" id="3.30.1390.10:FF:000001">
    <property type="entry name" value="50S ribosomal protein L7/L12"/>
    <property type="match status" value="1"/>
</dbReference>
<dbReference type="Gene3D" id="3.30.1390.10">
    <property type="match status" value="1"/>
</dbReference>
<dbReference type="Gene3D" id="1.20.5.710">
    <property type="entry name" value="Single helix bin"/>
    <property type="match status" value="1"/>
</dbReference>
<dbReference type="HAMAP" id="MF_00368">
    <property type="entry name" value="Ribosomal_bL12"/>
    <property type="match status" value="1"/>
</dbReference>
<dbReference type="InterPro" id="IPR000206">
    <property type="entry name" value="Ribosomal_bL12"/>
</dbReference>
<dbReference type="InterPro" id="IPR013823">
    <property type="entry name" value="Ribosomal_bL12_C"/>
</dbReference>
<dbReference type="InterPro" id="IPR014719">
    <property type="entry name" value="Ribosomal_bL12_C/ClpS-like"/>
</dbReference>
<dbReference type="InterPro" id="IPR008932">
    <property type="entry name" value="Ribosomal_bL12_oligo"/>
</dbReference>
<dbReference type="InterPro" id="IPR036235">
    <property type="entry name" value="Ribosomal_bL12_oligo_N_sf"/>
</dbReference>
<dbReference type="NCBIfam" id="TIGR00855">
    <property type="entry name" value="L12"/>
    <property type="match status" value="1"/>
</dbReference>
<dbReference type="PANTHER" id="PTHR45987">
    <property type="entry name" value="39S RIBOSOMAL PROTEIN L12"/>
    <property type="match status" value="1"/>
</dbReference>
<dbReference type="PANTHER" id="PTHR45987:SF4">
    <property type="entry name" value="LARGE RIBOSOMAL SUBUNIT PROTEIN BL12M"/>
    <property type="match status" value="1"/>
</dbReference>
<dbReference type="Pfam" id="PF00542">
    <property type="entry name" value="Ribosomal_L12"/>
    <property type="match status" value="1"/>
</dbReference>
<dbReference type="Pfam" id="PF16320">
    <property type="entry name" value="Ribosomal_L12_N"/>
    <property type="match status" value="1"/>
</dbReference>
<dbReference type="SUPFAM" id="SSF54736">
    <property type="entry name" value="ClpS-like"/>
    <property type="match status" value="1"/>
</dbReference>
<dbReference type="SUPFAM" id="SSF48300">
    <property type="entry name" value="Ribosomal protein L7/12, oligomerisation (N-terminal) domain"/>
    <property type="match status" value="1"/>
</dbReference>
<accession>A5F3P4</accession>
<accession>C3M3Y5</accession>
<feature type="chain" id="PRO_1000072121" description="Large ribosomal subunit protein bL12">
    <location>
        <begin position="1"/>
        <end position="121"/>
    </location>
</feature>
<evidence type="ECO:0000255" key="1">
    <source>
        <dbReference type="HAMAP-Rule" id="MF_00368"/>
    </source>
</evidence>
<evidence type="ECO:0000305" key="2"/>
<proteinExistence type="inferred from homology"/>
<organism>
    <name type="scientific">Vibrio cholerae serotype O1 (strain ATCC 39541 / Classical Ogawa 395 / O395)</name>
    <dbReference type="NCBI Taxonomy" id="345073"/>
    <lineage>
        <taxon>Bacteria</taxon>
        <taxon>Pseudomonadati</taxon>
        <taxon>Pseudomonadota</taxon>
        <taxon>Gammaproteobacteria</taxon>
        <taxon>Vibrionales</taxon>
        <taxon>Vibrionaceae</taxon>
        <taxon>Vibrio</taxon>
    </lineage>
</organism>
<reference key="1">
    <citation type="submission" date="2007-03" db="EMBL/GenBank/DDBJ databases">
        <authorList>
            <person name="Heidelberg J."/>
        </authorList>
    </citation>
    <scope>NUCLEOTIDE SEQUENCE [LARGE SCALE GENOMIC DNA]</scope>
    <source>
        <strain>ATCC 39541 / Classical Ogawa 395 / O395</strain>
    </source>
</reference>
<reference key="2">
    <citation type="journal article" date="2008" name="PLoS ONE">
        <title>A recalibrated molecular clock and independent origins for the cholera pandemic clones.</title>
        <authorList>
            <person name="Feng L."/>
            <person name="Reeves P.R."/>
            <person name="Lan R."/>
            <person name="Ren Y."/>
            <person name="Gao C."/>
            <person name="Zhou Z."/>
            <person name="Ren Y."/>
            <person name="Cheng J."/>
            <person name="Wang W."/>
            <person name="Wang J."/>
            <person name="Qian W."/>
            <person name="Li D."/>
            <person name="Wang L."/>
        </authorList>
    </citation>
    <scope>NUCLEOTIDE SEQUENCE [LARGE SCALE GENOMIC DNA]</scope>
    <source>
        <strain>ATCC 39541 / Classical Ogawa 395 / O395</strain>
    </source>
</reference>